<gene>
    <name evidence="1" type="primary">recR</name>
    <name type="ordered locus">SGO_1448</name>
</gene>
<name>RECR_STRGC</name>
<feature type="chain" id="PRO_1000074138" description="Recombination protein RecR">
    <location>
        <begin position="1"/>
        <end position="198"/>
    </location>
</feature>
<feature type="domain" description="Toprim" evidence="1">
    <location>
        <begin position="80"/>
        <end position="175"/>
    </location>
</feature>
<feature type="zinc finger region" description="C4-type" evidence="1">
    <location>
        <begin position="57"/>
        <end position="72"/>
    </location>
</feature>
<keyword id="KW-0227">DNA damage</keyword>
<keyword id="KW-0233">DNA recombination</keyword>
<keyword id="KW-0234">DNA repair</keyword>
<keyword id="KW-0479">Metal-binding</keyword>
<keyword id="KW-1185">Reference proteome</keyword>
<keyword id="KW-0862">Zinc</keyword>
<keyword id="KW-0863">Zinc-finger</keyword>
<protein>
    <recommendedName>
        <fullName evidence="1">Recombination protein RecR</fullName>
    </recommendedName>
</protein>
<sequence>MLYPTPIAKLIDSFSKLPGIGIKTATRLAFYTIGMSDDDVNEFAKNLLAAKRELSYCSICGNLTDEDPCAICRDESRDQSTILIVEDSRDVSAMENIQEYHGLYHVLHGLISPMNGVGPDDINLKSLITRLMDSEVSEVIVATNATADGEATSMYISRVLKPAGIKVTRLARGLAVGSDIEYADEVTLIRAIENRTEL</sequence>
<proteinExistence type="inferred from homology"/>
<accession>A8AY67</accession>
<dbReference type="EMBL" id="CP000725">
    <property type="protein sequence ID" value="ABV10488.1"/>
    <property type="molecule type" value="Genomic_DNA"/>
</dbReference>
<dbReference type="RefSeq" id="WP_012130528.1">
    <property type="nucleotide sequence ID" value="NC_009785.1"/>
</dbReference>
<dbReference type="SMR" id="A8AY67"/>
<dbReference type="STRING" id="467705.SGO_1448"/>
<dbReference type="KEGG" id="sgo:SGO_1448"/>
<dbReference type="eggNOG" id="COG0353">
    <property type="taxonomic scope" value="Bacteria"/>
</dbReference>
<dbReference type="HOGENOM" id="CLU_060739_1_0_9"/>
<dbReference type="Proteomes" id="UP000001131">
    <property type="component" value="Chromosome"/>
</dbReference>
<dbReference type="GO" id="GO:0003677">
    <property type="term" value="F:DNA binding"/>
    <property type="evidence" value="ECO:0007669"/>
    <property type="project" value="UniProtKB-UniRule"/>
</dbReference>
<dbReference type="GO" id="GO:0008270">
    <property type="term" value="F:zinc ion binding"/>
    <property type="evidence" value="ECO:0007669"/>
    <property type="project" value="UniProtKB-KW"/>
</dbReference>
<dbReference type="GO" id="GO:0006310">
    <property type="term" value="P:DNA recombination"/>
    <property type="evidence" value="ECO:0007669"/>
    <property type="project" value="UniProtKB-UniRule"/>
</dbReference>
<dbReference type="GO" id="GO:0006281">
    <property type="term" value="P:DNA repair"/>
    <property type="evidence" value="ECO:0007669"/>
    <property type="project" value="UniProtKB-UniRule"/>
</dbReference>
<dbReference type="CDD" id="cd01025">
    <property type="entry name" value="TOPRIM_recR"/>
    <property type="match status" value="1"/>
</dbReference>
<dbReference type="Gene3D" id="3.30.60.80">
    <property type="match status" value="1"/>
</dbReference>
<dbReference type="Gene3D" id="3.40.1360.10">
    <property type="match status" value="1"/>
</dbReference>
<dbReference type="Gene3D" id="6.10.250.240">
    <property type="match status" value="1"/>
</dbReference>
<dbReference type="Gene3D" id="1.10.8.420">
    <property type="entry name" value="RecR Domain 1"/>
    <property type="match status" value="1"/>
</dbReference>
<dbReference type="HAMAP" id="MF_00017">
    <property type="entry name" value="RecR"/>
    <property type="match status" value="1"/>
</dbReference>
<dbReference type="InterPro" id="IPR000093">
    <property type="entry name" value="DNA_Rcmb_RecR"/>
</dbReference>
<dbReference type="InterPro" id="IPR023627">
    <property type="entry name" value="Rcmb_RecR"/>
</dbReference>
<dbReference type="InterPro" id="IPR015967">
    <property type="entry name" value="Rcmb_RecR_Znf"/>
</dbReference>
<dbReference type="InterPro" id="IPR006171">
    <property type="entry name" value="TOPRIM_dom"/>
</dbReference>
<dbReference type="InterPro" id="IPR034137">
    <property type="entry name" value="TOPRIM_RecR"/>
</dbReference>
<dbReference type="NCBIfam" id="TIGR00615">
    <property type="entry name" value="recR"/>
    <property type="match status" value="1"/>
</dbReference>
<dbReference type="PANTHER" id="PTHR30446">
    <property type="entry name" value="RECOMBINATION PROTEIN RECR"/>
    <property type="match status" value="1"/>
</dbReference>
<dbReference type="PANTHER" id="PTHR30446:SF0">
    <property type="entry name" value="RECOMBINATION PROTEIN RECR"/>
    <property type="match status" value="1"/>
</dbReference>
<dbReference type="Pfam" id="PF21175">
    <property type="entry name" value="RecR_C"/>
    <property type="match status" value="1"/>
</dbReference>
<dbReference type="Pfam" id="PF21176">
    <property type="entry name" value="RecR_HhH"/>
    <property type="match status" value="1"/>
</dbReference>
<dbReference type="Pfam" id="PF02132">
    <property type="entry name" value="RecR_ZnF"/>
    <property type="match status" value="1"/>
</dbReference>
<dbReference type="Pfam" id="PF13662">
    <property type="entry name" value="Toprim_4"/>
    <property type="match status" value="1"/>
</dbReference>
<dbReference type="SMART" id="SM00493">
    <property type="entry name" value="TOPRIM"/>
    <property type="match status" value="1"/>
</dbReference>
<dbReference type="SUPFAM" id="SSF111304">
    <property type="entry name" value="Recombination protein RecR"/>
    <property type="match status" value="1"/>
</dbReference>
<dbReference type="PROSITE" id="PS01300">
    <property type="entry name" value="RECR"/>
    <property type="match status" value="1"/>
</dbReference>
<dbReference type="PROSITE" id="PS50880">
    <property type="entry name" value="TOPRIM"/>
    <property type="match status" value="1"/>
</dbReference>
<evidence type="ECO:0000255" key="1">
    <source>
        <dbReference type="HAMAP-Rule" id="MF_00017"/>
    </source>
</evidence>
<organism>
    <name type="scientific">Streptococcus gordonii (strain Challis / ATCC 35105 / BCRC 15272 / CH1 / DL1 / V288)</name>
    <dbReference type="NCBI Taxonomy" id="467705"/>
    <lineage>
        <taxon>Bacteria</taxon>
        <taxon>Bacillati</taxon>
        <taxon>Bacillota</taxon>
        <taxon>Bacilli</taxon>
        <taxon>Lactobacillales</taxon>
        <taxon>Streptococcaceae</taxon>
        <taxon>Streptococcus</taxon>
    </lineage>
</organism>
<comment type="function">
    <text evidence="1">May play a role in DNA repair. It seems to be involved in an RecBC-independent recombinational process of DNA repair. It may act with RecF and RecO.</text>
</comment>
<comment type="similarity">
    <text evidence="1">Belongs to the RecR family.</text>
</comment>
<reference key="1">
    <citation type="journal article" date="2007" name="J. Bacteriol.">
        <title>Genome-wide transcriptional changes in Streptococcus gordonii in response to competence signaling peptide.</title>
        <authorList>
            <person name="Vickerman M.M."/>
            <person name="Iobst S."/>
            <person name="Jesionowski A.M."/>
            <person name="Gill S.R."/>
        </authorList>
    </citation>
    <scope>NUCLEOTIDE SEQUENCE [LARGE SCALE GENOMIC DNA]</scope>
    <source>
        <strain>Challis / ATCC 35105 / BCRC 15272 / CH1 / DL1 / V288</strain>
    </source>
</reference>